<comment type="function">
    <text evidence="1">Increases the formation of ribosomal termination complexes and stimulates activities of RF-1 and RF-2. It binds guanine nucleotides but is not codon-specific. It may interact directly with the ribosome. The stimulation of RF-1 and RF-2 is significantly reduced by GTP and GDP, but not by GMP (By similarity).</text>
</comment>
<comment type="subcellular location">
    <subcellularLocation>
        <location evidence="1">Cytoplasm</location>
    </subcellularLocation>
</comment>
<comment type="similarity">
    <text evidence="2">Belongs to the TRAFAC class translation factor GTPase superfamily. Classic translation factor GTPase family. PrfC subfamily.</text>
</comment>
<accession>P39883</accession>
<keyword id="KW-0963">Cytoplasm</keyword>
<keyword id="KW-0342">GTP-binding</keyword>
<keyword id="KW-0547">Nucleotide-binding</keyword>
<keyword id="KW-0648">Protein biosynthesis</keyword>
<organism>
    <name type="scientific">Dichelobacter nodosus</name>
    <name type="common">Bacteroides nodosus</name>
    <dbReference type="NCBI Taxonomy" id="870"/>
    <lineage>
        <taxon>Bacteria</taxon>
        <taxon>Pseudomonadati</taxon>
        <taxon>Pseudomonadota</taxon>
        <taxon>Gammaproteobacteria</taxon>
        <taxon>Cardiobacteriales</taxon>
        <taxon>Cardiobacteriaceae</taxon>
        <taxon>Dichelobacter</taxon>
    </lineage>
</organism>
<dbReference type="EMBL" id="U06471">
    <property type="protein sequence ID" value="AAC43387.1"/>
    <property type="molecule type" value="Genomic_DNA"/>
</dbReference>
<dbReference type="RefSeq" id="WP_012030836.1">
    <property type="nucleotide sequence ID" value="NZ_SRJB01000010.1"/>
</dbReference>
<dbReference type="SMR" id="P39883"/>
<dbReference type="PATRIC" id="fig|870.4.peg.879"/>
<dbReference type="OMA" id="GFVFKIH"/>
<dbReference type="GO" id="GO:0005829">
    <property type="term" value="C:cytosol"/>
    <property type="evidence" value="ECO:0007669"/>
    <property type="project" value="TreeGrafter"/>
</dbReference>
<dbReference type="GO" id="GO:0005525">
    <property type="term" value="F:GTP binding"/>
    <property type="evidence" value="ECO:0007669"/>
    <property type="project" value="UniProtKB-UniRule"/>
</dbReference>
<dbReference type="GO" id="GO:0003924">
    <property type="term" value="F:GTPase activity"/>
    <property type="evidence" value="ECO:0007669"/>
    <property type="project" value="InterPro"/>
</dbReference>
<dbReference type="GO" id="GO:0097216">
    <property type="term" value="F:guanosine tetraphosphate binding"/>
    <property type="evidence" value="ECO:0007669"/>
    <property type="project" value="UniProtKB-ARBA"/>
</dbReference>
<dbReference type="GO" id="GO:0016150">
    <property type="term" value="F:translation release factor activity, codon nonspecific"/>
    <property type="evidence" value="ECO:0007669"/>
    <property type="project" value="TreeGrafter"/>
</dbReference>
<dbReference type="GO" id="GO:0016149">
    <property type="term" value="F:translation release factor activity, codon specific"/>
    <property type="evidence" value="ECO:0007669"/>
    <property type="project" value="UniProtKB-UniRule"/>
</dbReference>
<dbReference type="GO" id="GO:0006449">
    <property type="term" value="P:regulation of translational termination"/>
    <property type="evidence" value="ECO:0007669"/>
    <property type="project" value="UniProtKB-UniRule"/>
</dbReference>
<dbReference type="CDD" id="cd04169">
    <property type="entry name" value="RF3"/>
    <property type="match status" value="1"/>
</dbReference>
<dbReference type="CDD" id="cd16259">
    <property type="entry name" value="RF3_III"/>
    <property type="match status" value="1"/>
</dbReference>
<dbReference type="FunFam" id="3.30.70.3280:FF:000001">
    <property type="entry name" value="Peptide chain release factor 3"/>
    <property type="match status" value="1"/>
</dbReference>
<dbReference type="FunFam" id="3.40.50.300:FF:000542">
    <property type="entry name" value="Peptide chain release factor 3"/>
    <property type="match status" value="1"/>
</dbReference>
<dbReference type="Gene3D" id="3.40.50.300">
    <property type="entry name" value="P-loop containing nucleotide triphosphate hydrolases"/>
    <property type="match status" value="1"/>
</dbReference>
<dbReference type="Gene3D" id="3.30.70.3280">
    <property type="entry name" value="Peptide chain release factor 3, domain III"/>
    <property type="match status" value="1"/>
</dbReference>
<dbReference type="Gene3D" id="2.40.30.10">
    <property type="entry name" value="Translation factors"/>
    <property type="match status" value="1"/>
</dbReference>
<dbReference type="HAMAP" id="MF_00072">
    <property type="entry name" value="Rel_fac_3"/>
    <property type="match status" value="1"/>
</dbReference>
<dbReference type="InterPro" id="IPR053905">
    <property type="entry name" value="EF-G-like_DII"/>
</dbReference>
<dbReference type="InterPro" id="IPR035647">
    <property type="entry name" value="EFG_III/V"/>
</dbReference>
<dbReference type="InterPro" id="IPR031157">
    <property type="entry name" value="G_TR_CS"/>
</dbReference>
<dbReference type="InterPro" id="IPR027417">
    <property type="entry name" value="P-loop_NTPase"/>
</dbReference>
<dbReference type="InterPro" id="IPR004548">
    <property type="entry name" value="PrfC"/>
</dbReference>
<dbReference type="InterPro" id="IPR032090">
    <property type="entry name" value="RF3_C"/>
</dbReference>
<dbReference type="InterPro" id="IPR038467">
    <property type="entry name" value="RF3_dom_3_sf"/>
</dbReference>
<dbReference type="InterPro" id="IPR041732">
    <property type="entry name" value="RF3_GTP-bd"/>
</dbReference>
<dbReference type="InterPro" id="IPR005225">
    <property type="entry name" value="Small_GTP-bd"/>
</dbReference>
<dbReference type="InterPro" id="IPR000795">
    <property type="entry name" value="T_Tr_GTP-bd_dom"/>
</dbReference>
<dbReference type="InterPro" id="IPR009000">
    <property type="entry name" value="Transl_B-barrel_sf"/>
</dbReference>
<dbReference type="NCBIfam" id="TIGR00503">
    <property type="entry name" value="prfC"/>
    <property type="match status" value="1"/>
</dbReference>
<dbReference type="NCBIfam" id="NF001964">
    <property type="entry name" value="PRK00741.1"/>
    <property type="match status" value="1"/>
</dbReference>
<dbReference type="NCBIfam" id="TIGR00231">
    <property type="entry name" value="small_GTP"/>
    <property type="match status" value="1"/>
</dbReference>
<dbReference type="PANTHER" id="PTHR43556">
    <property type="entry name" value="PEPTIDE CHAIN RELEASE FACTOR RF3"/>
    <property type="match status" value="1"/>
</dbReference>
<dbReference type="PANTHER" id="PTHR43556:SF2">
    <property type="entry name" value="PEPTIDE CHAIN RELEASE FACTOR RF3"/>
    <property type="match status" value="1"/>
</dbReference>
<dbReference type="Pfam" id="PF22042">
    <property type="entry name" value="EF-G_D2"/>
    <property type="match status" value="1"/>
</dbReference>
<dbReference type="Pfam" id="PF00009">
    <property type="entry name" value="GTP_EFTU"/>
    <property type="match status" value="1"/>
</dbReference>
<dbReference type="Pfam" id="PF16658">
    <property type="entry name" value="RF3_C"/>
    <property type="match status" value="1"/>
</dbReference>
<dbReference type="PRINTS" id="PR00315">
    <property type="entry name" value="ELONGATNFCT"/>
</dbReference>
<dbReference type="SUPFAM" id="SSF54980">
    <property type="entry name" value="EF-G C-terminal domain-like"/>
    <property type="match status" value="1"/>
</dbReference>
<dbReference type="SUPFAM" id="SSF52540">
    <property type="entry name" value="P-loop containing nucleoside triphosphate hydrolases"/>
    <property type="match status" value="1"/>
</dbReference>
<dbReference type="SUPFAM" id="SSF50447">
    <property type="entry name" value="Translation proteins"/>
    <property type="match status" value="1"/>
</dbReference>
<dbReference type="PROSITE" id="PS00301">
    <property type="entry name" value="G_TR_1"/>
    <property type="match status" value="1"/>
</dbReference>
<dbReference type="PROSITE" id="PS51722">
    <property type="entry name" value="G_TR_2"/>
    <property type="match status" value="1"/>
</dbReference>
<feature type="chain" id="PRO_0000210929" description="Peptide chain release factor 3">
    <location>
        <begin position="1"/>
        <end position="531"/>
    </location>
</feature>
<feature type="domain" description="tr-type G">
    <location>
        <begin position="10"/>
        <end position="279"/>
    </location>
</feature>
<feature type="binding site" evidence="1">
    <location>
        <begin position="19"/>
        <end position="26"/>
    </location>
    <ligand>
        <name>GTP</name>
        <dbReference type="ChEBI" id="CHEBI:37565"/>
    </ligand>
</feature>
<feature type="binding site" evidence="1">
    <location>
        <begin position="87"/>
        <end position="91"/>
    </location>
    <ligand>
        <name>GTP</name>
        <dbReference type="ChEBI" id="CHEBI:37565"/>
    </ligand>
</feature>
<feature type="binding site" evidence="1">
    <location>
        <begin position="141"/>
        <end position="144"/>
    </location>
    <ligand>
        <name>GTP</name>
        <dbReference type="ChEBI" id="CHEBI:37565"/>
    </ligand>
</feature>
<sequence length="531" mass="59960">MSDILSQDWRDRRTFAIISHPDAGKTTLTEKLLLFGGAIALAGAVKGRKAAHHATSDWMKMEQERGISVTSSVMQFPYHGKVINLLDTPGHEDFSEDTYRTLTAVDSALMVIDCAKGVEERTIKLMEVCRLRTTPIFTFVNKLDRDGREPMEILDEIERVLHIQCAPVTWPIGMGRSLKGIYHLARDTVYFYTTGKGGASINHGETVVGLDNPRLDTLLPDIIDDFREEIHFLREVGNPFDHEAYLRGELTPVYFGSAISNFGVEEMLTDFAQLAPPPRPHRTTEREVAPQEEKLTGFVFKIQANMDLKHRDRIAFMRVNSGTFRAGMKLWQVRLGREVKIPDALTFLAAEREHAQEAFAGDIIGIHNHGTIRIGDTFTEGESLQFTGIPDFAPELFRRVQLKDPLKMKALLKGLAQLCEEGATQFFKPLIGSDLILGAIGVLQFEVVQQRLETEYNVKCQFESVAVATARWIEAPNDKALKQFIDKNQANLAHDHYEQLVYIAPSRVNLQLTQERFPDIVFSQTRDHLAQ</sequence>
<protein>
    <recommendedName>
        <fullName>Peptide chain release factor 3</fullName>
        <shortName>RF-3</shortName>
    </recommendedName>
</protein>
<gene>
    <name type="primary">prfC</name>
</gene>
<reference key="1">
    <citation type="journal article" date="1995" name="Microbiology">
        <title>A gene region in Dichelobacter nodosus encoding a lipopolysaccharide epitope.</title>
        <authorList>
            <person name="Billington S.J."/>
            <person name="Jost B.H."/>
            <person name="Rood J.I."/>
        </authorList>
    </citation>
    <scope>NUCLEOTIDE SEQUENCE [GENOMIC DNA]</scope>
    <source>
        <strain>A198</strain>
    </source>
</reference>
<evidence type="ECO:0000250" key="1"/>
<evidence type="ECO:0000305" key="2"/>
<proteinExistence type="inferred from homology"/>
<name>RF3_DICNO</name>